<gene>
    <name evidence="6" type="ORF">Vi01_199</name>
</gene>
<sequence length="411" mass="48718">MTHLSKMPTGYTPPAEWKYPIDLSIDYRKPENRMYLLKAWVEALSYTEEHNQQVRLMDYAIEVTEGITQLEKIERKIWMAFLWGCCYNGIGPWTIYSEFPVPPQSPQEFKRFCDWYNLNFERMRFDTDCRYRKSKMIPCVQSYIDWLAGRTQMDAFRPLLETKLQSDQFVKLWDTAMGWKYFGRLSAWNFLEALNMVFGNMYQIDVPGFMLRDRDGSESNRNGAAFLSNRDDWVTKHGKKKINGCPITDEECDILEADLEQAFKDCVAEFGHITFINRLNFETSGACWLKKFFRLKNTRYIGWDAERTWDEIDYMERIWPEYSCKALWEARSLWLPDTLLCEKAPAGHVPGVQKWKMPVFFETGVPLHIWHLQQGTRWEPSEVYTNLKMPVRKIDDNPKSTSVNLMSLLKR</sequence>
<evidence type="ECO:0000269" key="1">
    <source>
    </source>
</evidence>
<evidence type="ECO:0000269" key="2">
    <source>
    </source>
</evidence>
<evidence type="ECO:0000303" key="3">
    <source>
    </source>
</evidence>
<evidence type="ECO:0000305" key="4"/>
<evidence type="ECO:0000305" key="5">
    <source>
    </source>
</evidence>
<evidence type="ECO:0000312" key="6">
    <source>
        <dbReference type="EMBL" id="CBW38065.1"/>
    </source>
</evidence>
<organismHost>
    <name type="scientific">Salmonella typhi</name>
    <dbReference type="NCBI Taxonomy" id="90370"/>
</organismHost>
<keyword id="KW-0945">Host-virus interaction</keyword>
<keyword id="KW-1090">Inhibition of host innate immune response by virus</keyword>
<keyword id="KW-1185">Reference proteome</keyword>
<keyword id="KW-1258">Restriction-modification system evasion by virus</keyword>
<keyword id="KW-0808">Transferase</keyword>
<keyword id="KW-0899">Viral immunoevasion</keyword>
<organism>
    <name type="scientific">Salmonella phage ViI</name>
    <dbReference type="NCBI Taxonomy" id="1987993"/>
    <lineage>
        <taxon>Viruses</taxon>
        <taxon>Duplodnaviria</taxon>
        <taxon>Heunggongvirae</taxon>
        <taxon>Uroviricota</taxon>
        <taxon>Caudoviricetes</taxon>
        <taxon>Ackermannviridae</taxon>
        <taxon>Cvivirinae</taxon>
        <taxon>Kuttervirus</taxon>
    </lineage>
</organism>
<proteinExistence type="evidence at protein level"/>
<protein>
    <recommendedName>
        <fullName evidence="4">Serinyltransferase</fullName>
    </recommendedName>
    <alternativeName>
        <fullName evidence="3">Amino acid:DNA transferase</fullName>
        <shortName evidence="3">AADT</shortName>
    </alternativeName>
    <alternativeName>
        <fullName evidence="3">gp247</fullName>
    </alternativeName>
</protein>
<dbReference type="EMBL" id="FQ312032">
    <property type="protein sequence ID" value="CBW38065.1"/>
    <property type="molecule type" value="Genomic_DNA"/>
</dbReference>
<dbReference type="SMR" id="E1XTK6"/>
<dbReference type="Proteomes" id="UP000000339">
    <property type="component" value="Segment"/>
</dbReference>
<dbReference type="GO" id="GO:0016740">
    <property type="term" value="F:transferase activity"/>
    <property type="evidence" value="ECO:0007669"/>
    <property type="project" value="UniProtKB-KW"/>
</dbReference>
<dbReference type="GO" id="GO:0099018">
    <property type="term" value="P:symbiont-mediated evasion of host restriction-modification system"/>
    <property type="evidence" value="ECO:0007669"/>
    <property type="project" value="UniProtKB-KW"/>
</dbReference>
<dbReference type="GO" id="GO:0052170">
    <property type="term" value="P:symbiont-mediated suppression of host innate immune response"/>
    <property type="evidence" value="ECO:0007669"/>
    <property type="project" value="UniProtKB-KW"/>
</dbReference>
<dbReference type="InterPro" id="IPR040741">
    <property type="entry name" value="ADDT"/>
</dbReference>
<dbReference type="Pfam" id="PF18724">
    <property type="entry name" value="ADDT"/>
    <property type="match status" value="1"/>
</dbReference>
<accession>E1XTK6</accession>
<feature type="chain" id="PRO_0000456274" description="Serinyltransferase">
    <location>
        <begin position="1"/>
        <end position="411"/>
    </location>
</feature>
<feature type="active site" evidence="5">
    <location>
        <position position="282"/>
    </location>
</feature>
<feature type="mutagenesis site" description="Complete loss of enzymatic activity." evidence="2">
    <original>E</original>
    <variation>A</variation>
    <location>
        <position position="282"/>
    </location>
</feature>
<feature type="mutagenesis site" description="Complete loss of enzymatic activity." evidence="2">
    <original>C</original>
    <variation>A</variation>
    <location>
        <position position="287"/>
    </location>
</feature>
<reference key="1">
    <citation type="journal article" date="2010" name="J. Bacteriol.">
        <title>A conserved acetyl esterase domain targets diverse bacteriophages to the Vi capsular receptor of Salmonella enterica serovar Typhi.</title>
        <authorList>
            <person name="Pickard D."/>
            <person name="Toribio A.L."/>
            <person name="Petty N.K."/>
            <person name="van Tonder A."/>
            <person name="Yu L."/>
            <person name="Goulding D."/>
            <person name="Barrell B."/>
            <person name="Rance R."/>
            <person name="Harris D."/>
            <person name="Wetter M."/>
            <person name="Wain J."/>
            <person name="Choudhary J."/>
            <person name="Thomson N."/>
            <person name="Dougan G."/>
        </authorList>
    </citation>
    <scope>NUCLEOTIDE SEQUENCE [LARGE SCALE GENOMIC DNA]</scope>
</reference>
<reference key="2">
    <citation type="journal article" date="2018" name="Proc. Natl. Acad. Sci. U.S.A.">
        <title>Identification and biosynthesis of thymidine hypermodifications in the genomic DNA of widespread bacterial viruses.</title>
        <authorList>
            <person name="Lee Y.J."/>
            <person name="Dai N."/>
            <person name="Walsh S.E."/>
            <person name="Mueller S."/>
            <person name="Fraser M.E."/>
            <person name="Kauffman K.M."/>
            <person name="Guan C."/>
            <person name="Correa I.R. Jr."/>
            <person name="Weigele P.R."/>
        </authorList>
    </citation>
    <scope>FUNCTION</scope>
</reference>
<reference key="3">
    <citation type="journal article" date="2021" name="Nucleic Acids Res.">
        <title>Pathways of thymidine hypermodification.</title>
        <authorList>
            <person name="Lee Y.J."/>
            <person name="Dai N."/>
            <person name="Mueller S.I."/>
            <person name="Guan C."/>
            <person name="Parker M.J."/>
            <person name="Fraser M.E."/>
            <person name="Walsh S.E."/>
            <person name="Sridar J."/>
            <person name="Mulholland A."/>
            <person name="Nayak K."/>
            <person name="Sun Z."/>
            <person name="Lin Y.C."/>
            <person name="Comb D.G."/>
            <person name="Marks K."/>
            <person name="Gonzalez R."/>
            <person name="Dowling D.P."/>
            <person name="Bandarian V."/>
            <person name="Saleh L."/>
            <person name="Correa I.R."/>
            <person name="Weigele P.R."/>
        </authorList>
    </citation>
    <scope>FUNCTION</scope>
    <scope>CATALYTIC ACTIVITY</scope>
    <scope>MUTAGENESIS OF GLU-282 AND CYS-287</scope>
</reference>
<comment type="function">
    <text evidence="1 2">Transfers serine to 5-phosphomethyl-2'-deoxyuridine (5-PmdU) to produce 5-O-serinylthymidine (O-SerT) as a step in the pathway leading to thymidine hypermodifications in the viral genome (PubMed:34522950). As a final result of the pathway of hypermodification, 5-aminoethoxy-2'-deoxymethyluridine (5-NeOmdU) substitutes for about 40% of the thymidines in the viral DNA (PubMed:29555775, PubMed:34522950). These modifications probably prevent degradation of viral genome by the host restriction-modification antiviral defense system (PubMed:34522950).</text>
</comment>
<comment type="catalytic activity">
    <reaction evidence="2">
        <text>5-phosphomethyl-dUMP in DNA + L-serine = 5-O-(L-seryl)-dTMP in DNA + phosphate</text>
        <dbReference type="Rhea" id="RHEA:71567"/>
        <dbReference type="Rhea" id="RHEA-COMP:18039"/>
        <dbReference type="Rhea" id="RHEA-COMP:18046"/>
        <dbReference type="ChEBI" id="CHEBI:33384"/>
        <dbReference type="ChEBI" id="CHEBI:43474"/>
        <dbReference type="ChEBI" id="CHEBI:190918"/>
        <dbReference type="ChEBI" id="CHEBI:190922"/>
    </reaction>
</comment>
<comment type="similarity">
    <text evidence="4">Belongs to the thymidine aminotransferase family.</text>
</comment>
<name>SERDT_BPSAV</name>